<organism>
    <name type="scientific">Rattus norvegicus</name>
    <name type="common">Rat</name>
    <dbReference type="NCBI Taxonomy" id="10116"/>
    <lineage>
        <taxon>Eukaryota</taxon>
        <taxon>Metazoa</taxon>
        <taxon>Chordata</taxon>
        <taxon>Craniata</taxon>
        <taxon>Vertebrata</taxon>
        <taxon>Euteleostomi</taxon>
        <taxon>Mammalia</taxon>
        <taxon>Eutheria</taxon>
        <taxon>Euarchontoglires</taxon>
        <taxon>Glires</taxon>
        <taxon>Rodentia</taxon>
        <taxon>Myomorpha</taxon>
        <taxon>Muroidea</taxon>
        <taxon>Muridae</taxon>
        <taxon>Murinae</taxon>
        <taxon>Rattus</taxon>
    </lineage>
</organism>
<dbReference type="EMBL" id="M17419">
    <property type="protein sequence ID" value="AAA42074.1"/>
    <property type="molecule type" value="mRNA"/>
</dbReference>
<dbReference type="EMBL" id="X06148">
    <property type="protein sequence ID" value="CAA29506.1"/>
    <property type="molecule type" value="mRNA"/>
</dbReference>
<dbReference type="EMBL" id="BC060561">
    <property type="protein sequence ID" value="AAH60561.1"/>
    <property type="molecule type" value="mRNA"/>
</dbReference>
<dbReference type="PIR" id="S00111">
    <property type="entry name" value="R5RTL5"/>
</dbReference>
<dbReference type="RefSeq" id="NP_112361.1">
    <property type="nucleotide sequence ID" value="NM_031099.1"/>
</dbReference>
<dbReference type="RefSeq" id="XP_006250647.1">
    <property type="nucleotide sequence ID" value="XM_006250585.3"/>
</dbReference>
<dbReference type="PDB" id="7QGG">
    <property type="method" value="EM"/>
    <property type="resolution" value="2.86 A"/>
    <property type="chains" value="F=1-297"/>
</dbReference>
<dbReference type="PDBsum" id="7QGG"/>
<dbReference type="EMDB" id="EMD-13954"/>
<dbReference type="SMR" id="P09895"/>
<dbReference type="BioGRID" id="249635">
    <property type="interactions" value="3"/>
</dbReference>
<dbReference type="FunCoup" id="P09895">
    <property type="interactions" value="3313"/>
</dbReference>
<dbReference type="IntAct" id="P09895">
    <property type="interactions" value="11"/>
</dbReference>
<dbReference type="MINT" id="P09895"/>
<dbReference type="STRING" id="10116.ENSRNOP00000036514"/>
<dbReference type="iPTMnet" id="P09895"/>
<dbReference type="PhosphoSitePlus" id="P09895"/>
<dbReference type="SwissPalm" id="P09895"/>
<dbReference type="jPOST" id="P09895"/>
<dbReference type="PaxDb" id="10116-ENSRNOP00000036514"/>
<dbReference type="Ensembl" id="ENSRNOT00000030428.4">
    <property type="protein sequence ID" value="ENSRNOP00000036514.3"/>
    <property type="gene ID" value="ENSRNOG00000023529.4"/>
</dbReference>
<dbReference type="GeneID" id="81763"/>
<dbReference type="KEGG" id="rno:81763"/>
<dbReference type="UCSC" id="RGD:619825">
    <property type="organism name" value="rat"/>
</dbReference>
<dbReference type="AGR" id="RGD:619825"/>
<dbReference type="CTD" id="6125"/>
<dbReference type="RGD" id="619825">
    <property type="gene designation" value="Rpl5"/>
</dbReference>
<dbReference type="eggNOG" id="KOG0875">
    <property type="taxonomic scope" value="Eukaryota"/>
</dbReference>
<dbReference type="GeneTree" id="ENSGT00950000183210"/>
<dbReference type="HOGENOM" id="CLU_056222_1_0_1"/>
<dbReference type="InParanoid" id="P09895"/>
<dbReference type="OMA" id="IYEAQVE"/>
<dbReference type="OrthoDB" id="9577612at2759"/>
<dbReference type="PhylomeDB" id="P09895"/>
<dbReference type="TreeFam" id="TF300044"/>
<dbReference type="Reactome" id="R-RNO-156827">
    <property type="pathway name" value="L13a-mediated translational silencing of Ceruloplasmin expression"/>
</dbReference>
<dbReference type="Reactome" id="R-RNO-1799339">
    <property type="pathway name" value="SRP-dependent cotranslational protein targeting to membrane"/>
</dbReference>
<dbReference type="Reactome" id="R-RNO-6791226">
    <property type="pathway name" value="Major pathway of rRNA processing in the nucleolus and cytosol"/>
</dbReference>
<dbReference type="Reactome" id="R-RNO-72689">
    <property type="pathway name" value="Formation of a pool of free 40S subunits"/>
</dbReference>
<dbReference type="Reactome" id="R-RNO-72706">
    <property type="pathway name" value="GTP hydrolysis and joining of the 60S ribosomal subunit"/>
</dbReference>
<dbReference type="Reactome" id="R-RNO-975956">
    <property type="pathway name" value="Nonsense Mediated Decay (NMD) independent of the Exon Junction Complex (EJC)"/>
</dbReference>
<dbReference type="Reactome" id="R-RNO-975957">
    <property type="pathway name" value="Nonsense Mediated Decay (NMD) enhanced by the Exon Junction Complex (EJC)"/>
</dbReference>
<dbReference type="PRO" id="PR:P09895"/>
<dbReference type="Proteomes" id="UP000002494">
    <property type="component" value="Chromosome 14"/>
</dbReference>
<dbReference type="Bgee" id="ENSRNOG00000023529">
    <property type="expression patterns" value="Expressed in spleen and 19 other cell types or tissues"/>
</dbReference>
<dbReference type="GO" id="GO:0017101">
    <property type="term" value="C:aminoacyl-tRNA synthetase multienzyme complex"/>
    <property type="evidence" value="ECO:0000314"/>
    <property type="project" value="RGD"/>
</dbReference>
<dbReference type="GO" id="GO:0005737">
    <property type="term" value="C:cytoplasm"/>
    <property type="evidence" value="ECO:0000250"/>
    <property type="project" value="UniProtKB"/>
</dbReference>
<dbReference type="GO" id="GO:0022625">
    <property type="term" value="C:cytosolic large ribosomal subunit"/>
    <property type="evidence" value="ECO:0000314"/>
    <property type="project" value="RGD"/>
</dbReference>
<dbReference type="GO" id="GO:0022626">
    <property type="term" value="C:cytosolic ribosome"/>
    <property type="evidence" value="ECO:0000314"/>
    <property type="project" value="RGD"/>
</dbReference>
<dbReference type="GO" id="GO:0005730">
    <property type="term" value="C:nucleolus"/>
    <property type="evidence" value="ECO:0000250"/>
    <property type="project" value="UniProtKB"/>
</dbReference>
<dbReference type="GO" id="GO:0005654">
    <property type="term" value="C:nucleoplasm"/>
    <property type="evidence" value="ECO:0000266"/>
    <property type="project" value="RGD"/>
</dbReference>
<dbReference type="GO" id="GO:0005634">
    <property type="term" value="C:nucleus"/>
    <property type="evidence" value="ECO:0000266"/>
    <property type="project" value="RGD"/>
</dbReference>
<dbReference type="GO" id="GO:0014069">
    <property type="term" value="C:postsynaptic density"/>
    <property type="evidence" value="ECO:0000314"/>
    <property type="project" value="SynGO"/>
</dbReference>
<dbReference type="GO" id="GO:0032991">
    <property type="term" value="C:protein-containing complex"/>
    <property type="evidence" value="ECO:0000266"/>
    <property type="project" value="RGD"/>
</dbReference>
<dbReference type="GO" id="GO:1990904">
    <property type="term" value="C:ribonucleoprotein complex"/>
    <property type="evidence" value="ECO:0000314"/>
    <property type="project" value="RGD"/>
</dbReference>
<dbReference type="GO" id="GO:0045202">
    <property type="term" value="C:synapse"/>
    <property type="evidence" value="ECO:0000266"/>
    <property type="project" value="RGD"/>
</dbReference>
<dbReference type="GO" id="GO:0008097">
    <property type="term" value="F:5S rRNA binding"/>
    <property type="evidence" value="ECO:0000314"/>
    <property type="project" value="RGD"/>
</dbReference>
<dbReference type="GO" id="GO:0003730">
    <property type="term" value="F:mRNA 3'-UTR binding"/>
    <property type="evidence" value="ECO:0000266"/>
    <property type="project" value="RGD"/>
</dbReference>
<dbReference type="GO" id="GO:0048027">
    <property type="term" value="F:mRNA 5'-UTR binding"/>
    <property type="evidence" value="ECO:0000266"/>
    <property type="project" value="RGD"/>
</dbReference>
<dbReference type="GO" id="GO:0003729">
    <property type="term" value="F:mRNA binding"/>
    <property type="evidence" value="ECO:0000314"/>
    <property type="project" value="RGD"/>
</dbReference>
<dbReference type="GO" id="GO:0003735">
    <property type="term" value="F:structural constituent of ribosome"/>
    <property type="evidence" value="ECO:0000266"/>
    <property type="project" value="RGD"/>
</dbReference>
<dbReference type="GO" id="GO:1990948">
    <property type="term" value="F:ubiquitin ligase inhibitor activity"/>
    <property type="evidence" value="ECO:0000266"/>
    <property type="project" value="RGD"/>
</dbReference>
<dbReference type="GO" id="GO:0031625">
    <property type="term" value="F:ubiquitin protein ligase binding"/>
    <property type="evidence" value="ECO:0000266"/>
    <property type="project" value="RGD"/>
</dbReference>
<dbReference type="GO" id="GO:2000435">
    <property type="term" value="P:negative regulation of protein neddylation"/>
    <property type="evidence" value="ECO:0000266"/>
    <property type="project" value="RGD"/>
</dbReference>
<dbReference type="GO" id="GO:2000059">
    <property type="term" value="P:negative regulation of ubiquitin-dependent protein catabolic process"/>
    <property type="evidence" value="ECO:0000266"/>
    <property type="project" value="RGD"/>
</dbReference>
<dbReference type="GO" id="GO:0010628">
    <property type="term" value="P:positive regulation of gene expression"/>
    <property type="evidence" value="ECO:0000266"/>
    <property type="project" value="RGD"/>
</dbReference>
<dbReference type="GO" id="GO:0045727">
    <property type="term" value="P:positive regulation of translation"/>
    <property type="evidence" value="ECO:0000266"/>
    <property type="project" value="RGD"/>
</dbReference>
<dbReference type="GO" id="GO:0050821">
    <property type="term" value="P:protein stabilization"/>
    <property type="evidence" value="ECO:0000266"/>
    <property type="project" value="RGD"/>
</dbReference>
<dbReference type="GO" id="GO:1901796">
    <property type="term" value="P:regulation of signal transduction by p53 class mediator"/>
    <property type="evidence" value="ECO:0000266"/>
    <property type="project" value="RGD"/>
</dbReference>
<dbReference type="GO" id="GO:0000027">
    <property type="term" value="P:ribosomal large subunit assembly"/>
    <property type="evidence" value="ECO:0000266"/>
    <property type="project" value="RGD"/>
</dbReference>
<dbReference type="GO" id="GO:0042273">
    <property type="term" value="P:ribosomal large subunit biogenesis"/>
    <property type="evidence" value="ECO:0000266"/>
    <property type="project" value="RGD"/>
</dbReference>
<dbReference type="GO" id="GO:0006364">
    <property type="term" value="P:rRNA processing"/>
    <property type="evidence" value="ECO:0000266"/>
    <property type="project" value="RGD"/>
</dbReference>
<dbReference type="GO" id="GO:0006412">
    <property type="term" value="P:translation"/>
    <property type="evidence" value="ECO:0007669"/>
    <property type="project" value="InterPro"/>
</dbReference>
<dbReference type="CDD" id="cd00432">
    <property type="entry name" value="Ribosomal_L18_L5e"/>
    <property type="match status" value="1"/>
</dbReference>
<dbReference type="FunFam" id="3.30.420.100:FF:000011">
    <property type="entry name" value="60S ribosomal protein L5"/>
    <property type="match status" value="1"/>
</dbReference>
<dbReference type="FunFam" id="3.30.420.100:FF:000013">
    <property type="entry name" value="60S ribosomal protein L5 isoform X2"/>
    <property type="match status" value="1"/>
</dbReference>
<dbReference type="Gene3D" id="3.30.420.100">
    <property type="match status" value="1"/>
</dbReference>
<dbReference type="HAMAP" id="MF_01337_A">
    <property type="entry name" value="Ribosomal_uL18_A"/>
    <property type="match status" value="1"/>
</dbReference>
<dbReference type="InterPro" id="IPR005485">
    <property type="entry name" value="Rbsml_uL18_euk"/>
</dbReference>
<dbReference type="InterPro" id="IPR025607">
    <property type="entry name" value="Ribosomal_uL18_C_euk"/>
</dbReference>
<dbReference type="PANTHER" id="PTHR23410:SF12">
    <property type="entry name" value="LARGE RIBOSOMAL SUBUNIT PROTEIN UL18"/>
    <property type="match status" value="1"/>
</dbReference>
<dbReference type="PANTHER" id="PTHR23410">
    <property type="entry name" value="RIBOSOMAL PROTEIN L5-RELATED"/>
    <property type="match status" value="1"/>
</dbReference>
<dbReference type="Pfam" id="PF14204">
    <property type="entry name" value="Ribosomal_L18_c"/>
    <property type="match status" value="1"/>
</dbReference>
<dbReference type="Pfam" id="PF17144">
    <property type="entry name" value="Ribosomal_L5e"/>
    <property type="match status" value="1"/>
</dbReference>
<dbReference type="PRINTS" id="PR00058">
    <property type="entry name" value="RIBOSOMALL5"/>
</dbReference>
<dbReference type="SUPFAM" id="SSF53137">
    <property type="entry name" value="Translational machinery components"/>
    <property type="match status" value="1"/>
</dbReference>
<name>RL5_RAT</name>
<protein>
    <recommendedName>
        <fullName evidence="4">Large ribosomal subunit protein uL18</fullName>
    </recommendedName>
    <alternativeName>
        <fullName>60S ribosomal protein L5</fullName>
    </alternativeName>
</protein>
<gene>
    <name type="primary">Rpl5</name>
</gene>
<reference key="1">
    <citation type="journal article" date="1987" name="J. Biol. Chem.">
        <title>The primary structure of rat ribosomal protein L5. A comparison of the sequence of amino acids in the proteins that interact with 5 S rRNA.</title>
        <authorList>
            <person name="Chan Y.-L."/>
            <person name="Lin A."/>
            <person name="McNally J."/>
            <person name="Wool I.G."/>
        </authorList>
    </citation>
    <scope>NUCLEOTIDE SEQUENCE [MRNA]</scope>
    <source>
        <strain>Sprague-Dawley</strain>
        <tissue>Liver</tissue>
    </source>
</reference>
<reference key="2">
    <citation type="journal article" date="1987" name="Eur. J. Biochem.">
        <title>Molecular cloning and nucleotide sequence of cDNA specific for rat ribosomal protein L5.</title>
        <authorList>
            <person name="Tamura S."/>
            <person name="Kuwano Y."/>
            <person name="Nakayama T."/>
            <person name="Tanaka S."/>
            <person name="Tanaka T."/>
            <person name="Ogata K."/>
        </authorList>
    </citation>
    <scope>NUCLEOTIDE SEQUENCE [MRNA]</scope>
    <scope>PARTIAL PROTEIN SEQUENCE</scope>
    <source>
        <tissue>Liver</tissue>
    </source>
</reference>
<reference key="3">
    <citation type="journal article" date="2004" name="Genome Res.">
        <title>The status, quality, and expansion of the NIH full-length cDNA project: the Mammalian Gene Collection (MGC).</title>
        <authorList>
            <consortium name="The MGC Project Team"/>
        </authorList>
    </citation>
    <scope>NUCLEOTIDE SEQUENCE [LARGE SCALE MRNA]</scope>
    <source>
        <tissue>Pituitary</tissue>
    </source>
</reference>
<reference key="4">
    <citation type="journal article" date="1996" name="J. Biol. Chem.">
        <title>Distinct domains in ribosomal protein L5 mediate 5 S rRNA binding and nucleolar localization.</title>
        <authorList>
            <person name="Michael W.M."/>
            <person name="Dreyfuss G."/>
        </authorList>
    </citation>
    <scope>RNA-BINDING</scope>
</reference>
<accession>P09895</accession>
<feature type="initiator methionine" description="Removed" evidence="1">
    <location>
        <position position="1"/>
    </location>
</feature>
<feature type="chain" id="PRO_0000131436" description="Large ribosomal subunit protein uL18">
    <location>
        <begin position="2"/>
        <end position="297"/>
    </location>
</feature>
<feature type="region of interest" description="Disordered" evidence="3">
    <location>
        <begin position="253"/>
        <end position="297"/>
    </location>
</feature>
<feature type="compositionally biased region" description="Basic residues" evidence="3">
    <location>
        <begin position="258"/>
        <end position="268"/>
    </location>
</feature>
<feature type="modified residue" description="N-acetylglycine" evidence="1">
    <location>
        <position position="2"/>
    </location>
</feature>
<feature type="modified residue" description="N6-acetyllysine" evidence="1">
    <location>
        <position position="5"/>
    </location>
</feature>
<feature type="modified residue" description="N6-acetyllysine" evidence="1">
    <location>
        <position position="48"/>
    </location>
</feature>
<feature type="modified residue" description="Phosphoserine" evidence="1">
    <location>
        <position position="185"/>
    </location>
</feature>
<feature type="modified residue" description="N6-acetyllysine; alternate" evidence="2">
    <location>
        <position position="220"/>
    </location>
</feature>
<feature type="modified residue" description="Phosphothreonine" evidence="1">
    <location>
        <position position="232"/>
    </location>
</feature>
<feature type="modified residue" description="Phosphoserine" evidence="1">
    <location>
        <position position="272"/>
    </location>
</feature>
<feature type="cross-link" description="Glycyl lysine isopeptide (Lys-Gly) (interchain with G-Cter in SUMO1); alternate" evidence="1">
    <location>
        <position position="220"/>
    </location>
</feature>
<feature type="cross-link" description="Glycyl lysine isopeptide (Lys-Gly) (interchain with G-Cter in SUMO2); alternate" evidence="1">
    <location>
        <position position="220"/>
    </location>
</feature>
<feature type="sequence conflict" description="In Ref. 1; AAA42074." evidence="4" ref="1">
    <location>
        <position position="236"/>
    </location>
</feature>
<comment type="function">
    <text evidence="1">Component of the ribosome, a large ribonucleoprotein complex responsible for the synthesis of proteins in the cell. The small ribosomal subunit (SSU) binds messenger RNAs (mRNAs) and translates the encoded message by selecting cognate aminoacyl-transfer RNA (tRNA) molecules. The large subunit (LSU) contains the ribosomal catalytic site termed the peptidyl transferase center (PTC), which catalyzes the formation of peptide bonds, thereby polymerizing the amino acids delivered by tRNAs into a polypeptide chain. The nascent polypeptides leave the ribosome through a tunnel in the LSU and interact with protein factors that function in enzymatic processing, targeting, and the membrane insertion of nascent chains at the exit of the ribosomal tunnel. As part of the 5S RNP/5S ribonucleoprotein particle it is an essential component of the LSU, required for its formation and the maturation of rRNAs. It also couples ribosome biogenesis to p53/TP53 activation. As part of the 5S RNP it accumulates in the nucleoplasm and inhibits MDM2, when ribosome biogenesis is perturbed, mediating the stabilization and the activation of TP53.</text>
</comment>
<comment type="subunit">
    <text evidence="1">Component of the large ribosomal subunit (LSU). Part of the 5S RNP complex, which is a LSU subcomplex composed of the 5S RNA, RPL5 and RPL11 (By similarity). Component of a hexameric 5S RNP precursor complex, composed of 5S RNA, RRS1, RPF2/BXDC1, RPL5, RPL11 and HEATR3; this complex acts as a precursor for ribosome assembly (By similarity). Interacts with NVL in an ATP-dependent manner. Interacts with RRP1B (By similarity). Interacts with IPO5, IPO7 and KPNB1; these interactions may be involved in RPL5 nuclear import for the assembly of ribosomal subunits (By similarity). Interacts with RRP1B (By similarity).</text>
</comment>
<comment type="interaction">
    <interactant intactId="EBI-916235">
        <id>P09895</id>
    </interactant>
    <interactant intactId="EBI-352326">
        <id>P62142</id>
        <label>Ppp1cb</label>
    </interactant>
    <organismsDiffer>false</organismsDiffer>
    <experiments>2</experiments>
</comment>
<comment type="subcellular location">
    <subcellularLocation>
        <location evidence="1">Cytoplasm</location>
    </subcellularLocation>
    <subcellularLocation>
        <location evidence="1">Nucleus</location>
        <location evidence="1">Nucleolus</location>
    </subcellularLocation>
    <text evidence="1">Although RP5 is functional within the cytoplasm, the assembly of ribosomal subunits occurs in the nucleus. RPL5 nuclear import is mediated by IPO5/RanBP5, IPO7/RanBP7, KPNB1/importin-beta or TPNO1/Trn.</text>
</comment>
<comment type="similarity">
    <text evidence="4">Belongs to the universal ribosomal protein uL18 family.</text>
</comment>
<sequence>MGFVKVVKNKAYFKRYQVRFRRRREGKTDYYARKRLVIQDKNKYNTPKYRMIVRVTNRDIICQIAYARIEGDMIVCAAYAHELPKYGVKVGLTNYAAAYCTGLLLARRLLNRFGMDKIYEGQVEVNGDEYNVESIDGQPGAFTCYLDAGLARTTTGNKVFGALKGAVDGGLSIPHSTKRFPGYDSESKEFNAEVHRKHIMGQNVADYMRYLMEEDEDAYKKQFSQYIKNNVTPDMMEEMYKKAHAAIRENPVYEKKPKREVKKKRWNRPKMSLAQKKDRVAQKKASFLRAQERAAES</sequence>
<evidence type="ECO:0000250" key="1">
    <source>
        <dbReference type="UniProtKB" id="P46777"/>
    </source>
</evidence>
<evidence type="ECO:0000250" key="2">
    <source>
        <dbReference type="UniProtKB" id="P47962"/>
    </source>
</evidence>
<evidence type="ECO:0000256" key="3">
    <source>
        <dbReference type="SAM" id="MobiDB-lite"/>
    </source>
</evidence>
<evidence type="ECO:0000305" key="4"/>
<keyword id="KW-0002">3D-structure</keyword>
<keyword id="KW-0007">Acetylation</keyword>
<keyword id="KW-0963">Cytoplasm</keyword>
<keyword id="KW-0903">Direct protein sequencing</keyword>
<keyword id="KW-1017">Isopeptide bond</keyword>
<keyword id="KW-0539">Nucleus</keyword>
<keyword id="KW-0597">Phosphoprotein</keyword>
<keyword id="KW-1185">Reference proteome</keyword>
<keyword id="KW-0687">Ribonucleoprotein</keyword>
<keyword id="KW-0689">Ribosomal protein</keyword>
<keyword id="KW-0694">RNA-binding</keyword>
<keyword id="KW-0699">rRNA-binding</keyword>
<keyword id="KW-0832">Ubl conjugation</keyword>
<proteinExistence type="evidence at protein level"/>